<name>SYGA_SHEB8</name>
<sequence>MTTKHDVKTFQGFILTLQEYWAQQGCAIVQPLDMEVGAGTFHPQTFLRSLGPEPMSSAYVQPSRRPTDGRYGENPNRLQHYYQFQVVLKPSPDNIQELYLGSLQALGIDTQIHDIRFVEDNWESPTLGAWGLGWEIWLNGMEVTQFTYFQQVGGIECSPVTGEITYGLERLAMYIQGVDSVYDLVWTDGPLGRITYGDVFHQNEVEQSTYNFEHADVDFMFTLFDQCEKMCQHLLSLEKPLPLPAYEQVMKASHAFNLLDARHAISVTERQRYILRVRTMAKAVAESYYQAREALGFPMCK</sequence>
<protein>
    <recommendedName>
        <fullName evidence="1">Glycine--tRNA ligase alpha subunit</fullName>
        <ecNumber evidence="1">6.1.1.14</ecNumber>
    </recommendedName>
    <alternativeName>
        <fullName evidence="1">Glycyl-tRNA synthetase alpha subunit</fullName>
        <shortName evidence="1">GlyRS</shortName>
    </alternativeName>
</protein>
<gene>
    <name evidence="1" type="primary">glyQ</name>
    <name type="ordered locus">Shew185_0009</name>
</gene>
<reference key="1">
    <citation type="submission" date="2007-07" db="EMBL/GenBank/DDBJ databases">
        <title>Complete sequence of chromosome of Shewanella baltica OS185.</title>
        <authorList>
            <consortium name="US DOE Joint Genome Institute"/>
            <person name="Copeland A."/>
            <person name="Lucas S."/>
            <person name="Lapidus A."/>
            <person name="Barry K."/>
            <person name="Glavina del Rio T."/>
            <person name="Dalin E."/>
            <person name="Tice H."/>
            <person name="Pitluck S."/>
            <person name="Sims D."/>
            <person name="Brettin T."/>
            <person name="Bruce D."/>
            <person name="Detter J.C."/>
            <person name="Han C."/>
            <person name="Schmutz J."/>
            <person name="Larimer F."/>
            <person name="Land M."/>
            <person name="Hauser L."/>
            <person name="Kyrpides N."/>
            <person name="Mikhailova N."/>
            <person name="Brettar I."/>
            <person name="Rodrigues J."/>
            <person name="Konstantinidis K."/>
            <person name="Tiedje J."/>
            <person name="Richardson P."/>
        </authorList>
    </citation>
    <scope>NUCLEOTIDE SEQUENCE [LARGE SCALE GENOMIC DNA]</scope>
    <source>
        <strain>OS185</strain>
    </source>
</reference>
<evidence type="ECO:0000255" key="1">
    <source>
        <dbReference type="HAMAP-Rule" id="MF_00254"/>
    </source>
</evidence>
<organism>
    <name type="scientific">Shewanella baltica (strain OS185)</name>
    <dbReference type="NCBI Taxonomy" id="402882"/>
    <lineage>
        <taxon>Bacteria</taxon>
        <taxon>Pseudomonadati</taxon>
        <taxon>Pseudomonadota</taxon>
        <taxon>Gammaproteobacteria</taxon>
        <taxon>Alteromonadales</taxon>
        <taxon>Shewanellaceae</taxon>
        <taxon>Shewanella</taxon>
    </lineage>
</organism>
<comment type="catalytic activity">
    <reaction evidence="1">
        <text>tRNA(Gly) + glycine + ATP = glycyl-tRNA(Gly) + AMP + diphosphate</text>
        <dbReference type="Rhea" id="RHEA:16013"/>
        <dbReference type="Rhea" id="RHEA-COMP:9664"/>
        <dbReference type="Rhea" id="RHEA-COMP:9683"/>
        <dbReference type="ChEBI" id="CHEBI:30616"/>
        <dbReference type="ChEBI" id="CHEBI:33019"/>
        <dbReference type="ChEBI" id="CHEBI:57305"/>
        <dbReference type="ChEBI" id="CHEBI:78442"/>
        <dbReference type="ChEBI" id="CHEBI:78522"/>
        <dbReference type="ChEBI" id="CHEBI:456215"/>
        <dbReference type="EC" id="6.1.1.14"/>
    </reaction>
</comment>
<comment type="subunit">
    <text evidence="1">Tetramer of two alpha and two beta subunits.</text>
</comment>
<comment type="subcellular location">
    <subcellularLocation>
        <location evidence="1">Cytoplasm</location>
    </subcellularLocation>
</comment>
<comment type="similarity">
    <text evidence="1">Belongs to the class-II aminoacyl-tRNA synthetase family.</text>
</comment>
<keyword id="KW-0030">Aminoacyl-tRNA synthetase</keyword>
<keyword id="KW-0067">ATP-binding</keyword>
<keyword id="KW-0963">Cytoplasm</keyword>
<keyword id="KW-0436">Ligase</keyword>
<keyword id="KW-0547">Nucleotide-binding</keyword>
<keyword id="KW-0648">Protein biosynthesis</keyword>
<feature type="chain" id="PRO_1000047484" description="Glycine--tRNA ligase alpha subunit">
    <location>
        <begin position="1"/>
        <end position="301"/>
    </location>
</feature>
<dbReference type="EC" id="6.1.1.14" evidence="1"/>
<dbReference type="EMBL" id="CP000753">
    <property type="protein sequence ID" value="ABS06182.1"/>
    <property type="molecule type" value="Genomic_DNA"/>
</dbReference>
<dbReference type="RefSeq" id="WP_006083814.1">
    <property type="nucleotide sequence ID" value="NC_009665.1"/>
</dbReference>
<dbReference type="SMR" id="A6WH93"/>
<dbReference type="GeneID" id="11770383"/>
<dbReference type="KEGG" id="sbm:Shew185_0009"/>
<dbReference type="HOGENOM" id="CLU_057066_1_0_6"/>
<dbReference type="GO" id="GO:0005829">
    <property type="term" value="C:cytosol"/>
    <property type="evidence" value="ECO:0007669"/>
    <property type="project" value="TreeGrafter"/>
</dbReference>
<dbReference type="GO" id="GO:0005524">
    <property type="term" value="F:ATP binding"/>
    <property type="evidence" value="ECO:0007669"/>
    <property type="project" value="UniProtKB-UniRule"/>
</dbReference>
<dbReference type="GO" id="GO:0004820">
    <property type="term" value="F:glycine-tRNA ligase activity"/>
    <property type="evidence" value="ECO:0007669"/>
    <property type="project" value="UniProtKB-UniRule"/>
</dbReference>
<dbReference type="GO" id="GO:0006426">
    <property type="term" value="P:glycyl-tRNA aminoacylation"/>
    <property type="evidence" value="ECO:0007669"/>
    <property type="project" value="UniProtKB-UniRule"/>
</dbReference>
<dbReference type="CDD" id="cd00733">
    <property type="entry name" value="GlyRS_alpha_core"/>
    <property type="match status" value="1"/>
</dbReference>
<dbReference type="FunFam" id="3.30.930.10:FF:000006">
    <property type="entry name" value="Glycine--tRNA ligase alpha subunit"/>
    <property type="match status" value="1"/>
</dbReference>
<dbReference type="Gene3D" id="3.30.930.10">
    <property type="entry name" value="Bira Bifunctional Protein, Domain 2"/>
    <property type="match status" value="1"/>
</dbReference>
<dbReference type="Gene3D" id="1.20.58.180">
    <property type="entry name" value="Class II aaRS and biotin synthetases, domain 2"/>
    <property type="match status" value="1"/>
</dbReference>
<dbReference type="HAMAP" id="MF_00254">
    <property type="entry name" value="Gly_tRNA_synth_alpha"/>
    <property type="match status" value="1"/>
</dbReference>
<dbReference type="InterPro" id="IPR045864">
    <property type="entry name" value="aa-tRNA-synth_II/BPL/LPL"/>
</dbReference>
<dbReference type="InterPro" id="IPR006194">
    <property type="entry name" value="Gly-tRNA-synth_heterodimer"/>
</dbReference>
<dbReference type="InterPro" id="IPR002310">
    <property type="entry name" value="Gly-tRNA_ligase_asu"/>
</dbReference>
<dbReference type="NCBIfam" id="TIGR00388">
    <property type="entry name" value="glyQ"/>
    <property type="match status" value="1"/>
</dbReference>
<dbReference type="NCBIfam" id="NF006827">
    <property type="entry name" value="PRK09348.1"/>
    <property type="match status" value="1"/>
</dbReference>
<dbReference type="PANTHER" id="PTHR30075:SF2">
    <property type="entry name" value="GLYCINE--TRNA LIGASE, CHLOROPLASTIC_MITOCHONDRIAL 2"/>
    <property type="match status" value="1"/>
</dbReference>
<dbReference type="PANTHER" id="PTHR30075">
    <property type="entry name" value="GLYCYL-TRNA SYNTHETASE"/>
    <property type="match status" value="1"/>
</dbReference>
<dbReference type="Pfam" id="PF02091">
    <property type="entry name" value="tRNA-synt_2e"/>
    <property type="match status" value="1"/>
</dbReference>
<dbReference type="PRINTS" id="PR01044">
    <property type="entry name" value="TRNASYNTHGA"/>
</dbReference>
<dbReference type="SUPFAM" id="SSF55681">
    <property type="entry name" value="Class II aaRS and biotin synthetases"/>
    <property type="match status" value="1"/>
</dbReference>
<dbReference type="PROSITE" id="PS50861">
    <property type="entry name" value="AA_TRNA_LIGASE_II_GLYAB"/>
    <property type="match status" value="1"/>
</dbReference>
<accession>A6WH93</accession>
<proteinExistence type="inferred from homology"/>